<reference key="1">
    <citation type="journal article" date="1999" name="Nature">
        <title>Sequence and analysis of chromosome 4 of the plant Arabidopsis thaliana.</title>
        <authorList>
            <person name="Mayer K.F.X."/>
            <person name="Schueller C."/>
            <person name="Wambutt R."/>
            <person name="Murphy G."/>
            <person name="Volckaert G."/>
            <person name="Pohl T."/>
            <person name="Duesterhoeft A."/>
            <person name="Stiekema W."/>
            <person name="Entian K.-D."/>
            <person name="Terryn N."/>
            <person name="Harris B."/>
            <person name="Ansorge W."/>
            <person name="Brandt P."/>
            <person name="Grivell L.A."/>
            <person name="Rieger M."/>
            <person name="Weichselgartner M."/>
            <person name="de Simone V."/>
            <person name="Obermaier B."/>
            <person name="Mache R."/>
            <person name="Mueller M."/>
            <person name="Kreis M."/>
            <person name="Delseny M."/>
            <person name="Puigdomenech P."/>
            <person name="Watson M."/>
            <person name="Schmidtheini T."/>
            <person name="Reichert B."/>
            <person name="Portetelle D."/>
            <person name="Perez-Alonso M."/>
            <person name="Boutry M."/>
            <person name="Bancroft I."/>
            <person name="Vos P."/>
            <person name="Hoheisel J."/>
            <person name="Zimmermann W."/>
            <person name="Wedler H."/>
            <person name="Ridley P."/>
            <person name="Langham S.-A."/>
            <person name="McCullagh B."/>
            <person name="Bilham L."/>
            <person name="Robben J."/>
            <person name="van der Schueren J."/>
            <person name="Grymonprez B."/>
            <person name="Chuang Y.-J."/>
            <person name="Vandenbussche F."/>
            <person name="Braeken M."/>
            <person name="Weltjens I."/>
            <person name="Voet M."/>
            <person name="Bastiaens I."/>
            <person name="Aert R."/>
            <person name="Defoor E."/>
            <person name="Weitzenegger T."/>
            <person name="Bothe G."/>
            <person name="Ramsperger U."/>
            <person name="Hilbert H."/>
            <person name="Braun M."/>
            <person name="Holzer E."/>
            <person name="Brandt A."/>
            <person name="Peters S."/>
            <person name="van Staveren M."/>
            <person name="Dirkse W."/>
            <person name="Mooijman P."/>
            <person name="Klein Lankhorst R."/>
            <person name="Rose M."/>
            <person name="Hauf J."/>
            <person name="Koetter P."/>
            <person name="Berneiser S."/>
            <person name="Hempel S."/>
            <person name="Feldpausch M."/>
            <person name="Lamberth S."/>
            <person name="Van den Daele H."/>
            <person name="De Keyser A."/>
            <person name="Buysshaert C."/>
            <person name="Gielen J."/>
            <person name="Villarroel R."/>
            <person name="De Clercq R."/>
            <person name="van Montagu M."/>
            <person name="Rogers J."/>
            <person name="Cronin A."/>
            <person name="Quail M.A."/>
            <person name="Bray-Allen S."/>
            <person name="Clark L."/>
            <person name="Doggett J."/>
            <person name="Hall S."/>
            <person name="Kay M."/>
            <person name="Lennard N."/>
            <person name="McLay K."/>
            <person name="Mayes R."/>
            <person name="Pettett A."/>
            <person name="Rajandream M.A."/>
            <person name="Lyne M."/>
            <person name="Benes V."/>
            <person name="Rechmann S."/>
            <person name="Borkova D."/>
            <person name="Bloecker H."/>
            <person name="Scharfe M."/>
            <person name="Grimm M."/>
            <person name="Loehnert T.-H."/>
            <person name="Dose S."/>
            <person name="de Haan M."/>
            <person name="Maarse A.C."/>
            <person name="Schaefer M."/>
            <person name="Mueller-Auer S."/>
            <person name="Gabel C."/>
            <person name="Fuchs M."/>
            <person name="Fartmann B."/>
            <person name="Granderath K."/>
            <person name="Dauner D."/>
            <person name="Herzl A."/>
            <person name="Neumann S."/>
            <person name="Argiriou A."/>
            <person name="Vitale D."/>
            <person name="Liguori R."/>
            <person name="Piravandi E."/>
            <person name="Massenet O."/>
            <person name="Quigley F."/>
            <person name="Clabauld G."/>
            <person name="Muendlein A."/>
            <person name="Felber R."/>
            <person name="Schnabl S."/>
            <person name="Hiller R."/>
            <person name="Schmidt W."/>
            <person name="Lecharny A."/>
            <person name="Aubourg S."/>
            <person name="Chefdor F."/>
            <person name="Cooke R."/>
            <person name="Berger C."/>
            <person name="Monfort A."/>
            <person name="Casacuberta E."/>
            <person name="Gibbons T."/>
            <person name="Weber N."/>
            <person name="Vandenbol M."/>
            <person name="Bargues M."/>
            <person name="Terol J."/>
            <person name="Torres A."/>
            <person name="Perez-Perez A."/>
            <person name="Purnelle B."/>
            <person name="Bent E."/>
            <person name="Johnson S."/>
            <person name="Tacon D."/>
            <person name="Jesse T."/>
            <person name="Heijnen L."/>
            <person name="Schwarz S."/>
            <person name="Scholler P."/>
            <person name="Heber S."/>
            <person name="Francs P."/>
            <person name="Bielke C."/>
            <person name="Frishman D."/>
            <person name="Haase D."/>
            <person name="Lemcke K."/>
            <person name="Mewes H.-W."/>
            <person name="Stocker S."/>
            <person name="Zaccaria P."/>
            <person name="Bevan M."/>
            <person name="Wilson R.K."/>
            <person name="de la Bastide M."/>
            <person name="Habermann K."/>
            <person name="Parnell L."/>
            <person name="Dedhia N."/>
            <person name="Gnoj L."/>
            <person name="Schutz K."/>
            <person name="Huang E."/>
            <person name="Spiegel L."/>
            <person name="Sekhon M."/>
            <person name="Murray J."/>
            <person name="Sheet P."/>
            <person name="Cordes M."/>
            <person name="Abu-Threideh J."/>
            <person name="Stoneking T."/>
            <person name="Kalicki J."/>
            <person name="Graves T."/>
            <person name="Harmon G."/>
            <person name="Edwards J."/>
            <person name="Latreille P."/>
            <person name="Courtney L."/>
            <person name="Cloud J."/>
            <person name="Abbott A."/>
            <person name="Scott K."/>
            <person name="Johnson D."/>
            <person name="Minx P."/>
            <person name="Bentley D."/>
            <person name="Fulton B."/>
            <person name="Miller N."/>
            <person name="Greco T."/>
            <person name="Kemp K."/>
            <person name="Kramer J."/>
            <person name="Fulton L."/>
            <person name="Mardis E."/>
            <person name="Dante M."/>
            <person name="Pepin K."/>
            <person name="Hillier L.W."/>
            <person name="Nelson J."/>
            <person name="Spieth J."/>
            <person name="Ryan E."/>
            <person name="Andrews S."/>
            <person name="Geisel C."/>
            <person name="Layman D."/>
            <person name="Du H."/>
            <person name="Ali J."/>
            <person name="Berghoff A."/>
            <person name="Jones K."/>
            <person name="Drone K."/>
            <person name="Cotton M."/>
            <person name="Joshu C."/>
            <person name="Antonoiu B."/>
            <person name="Zidanic M."/>
            <person name="Strong C."/>
            <person name="Sun H."/>
            <person name="Lamar B."/>
            <person name="Yordan C."/>
            <person name="Ma P."/>
            <person name="Zhong J."/>
            <person name="Preston R."/>
            <person name="Vil D."/>
            <person name="Shekher M."/>
            <person name="Matero A."/>
            <person name="Shah R."/>
            <person name="Swaby I.K."/>
            <person name="O'Shaughnessy A."/>
            <person name="Rodriguez M."/>
            <person name="Hoffman J."/>
            <person name="Till S."/>
            <person name="Granat S."/>
            <person name="Shohdy N."/>
            <person name="Hasegawa A."/>
            <person name="Hameed A."/>
            <person name="Lodhi M."/>
            <person name="Johnson A."/>
            <person name="Chen E."/>
            <person name="Marra M.A."/>
            <person name="Martienssen R."/>
            <person name="McCombie W.R."/>
        </authorList>
    </citation>
    <scope>NUCLEOTIDE SEQUENCE [LARGE SCALE GENOMIC DNA]</scope>
    <source>
        <strain>cv. Columbia</strain>
    </source>
</reference>
<reference key="2">
    <citation type="journal article" date="2017" name="Plant J.">
        <title>Araport11: a complete reannotation of the Arabidopsis thaliana reference genome.</title>
        <authorList>
            <person name="Cheng C.Y."/>
            <person name="Krishnakumar V."/>
            <person name="Chan A.P."/>
            <person name="Thibaud-Nissen F."/>
            <person name="Schobel S."/>
            <person name="Town C.D."/>
        </authorList>
    </citation>
    <scope>GENOME REANNOTATION</scope>
    <source>
        <strain>cv. Columbia</strain>
    </source>
</reference>
<reference key="3">
    <citation type="submission" date="2007-03" db="EMBL/GenBank/DDBJ databases">
        <title>Arabidopsis ORF clones.</title>
        <authorList>
            <person name="Kim C.J."/>
            <person name="Bautista V.R."/>
            <person name="Chen H."/>
            <person name="De Los Reyes C."/>
            <person name="Wu S.Y."/>
            <person name="Ecker J.R."/>
        </authorList>
    </citation>
    <scope>NUCLEOTIDE SEQUENCE [LARGE SCALE MRNA]</scope>
    <source>
        <strain>cv. Columbia</strain>
    </source>
</reference>
<reference key="4">
    <citation type="journal article" date="2005" name="Nature">
        <title>A new family of RhoGEFs activates the Rop molecular switch in plants.</title>
        <authorList>
            <person name="Berken A."/>
            <person name="Thomas C."/>
            <person name="Wittinghofer A."/>
        </authorList>
    </citation>
    <scope>GENE FAMILY</scope>
</reference>
<evidence type="ECO:0000250" key="1"/>
<evidence type="ECO:0000255" key="2">
    <source>
        <dbReference type="PROSITE-ProRule" id="PRU00663"/>
    </source>
</evidence>
<evidence type="ECO:0000256" key="3">
    <source>
        <dbReference type="SAM" id="MobiDB-lite"/>
    </source>
</evidence>
<evidence type="ECO:0000305" key="4"/>
<feature type="chain" id="PRO_0000423889" description="Rop guanine nucleotide exchange factor 3">
    <location>
        <begin position="1"/>
        <end position="473"/>
    </location>
</feature>
<feature type="domain" description="PRONE" evidence="2">
    <location>
        <begin position="95"/>
        <end position="473"/>
    </location>
</feature>
<feature type="region of interest" description="Disordered" evidence="3">
    <location>
        <begin position="1"/>
        <end position="28"/>
    </location>
</feature>
<feature type="compositionally biased region" description="Polar residues" evidence="3">
    <location>
        <begin position="16"/>
        <end position="28"/>
    </location>
</feature>
<comment type="function">
    <text evidence="1">Guanine-nucleotide exchange factor (GEF) that acts as an activator of Rop (Rho of plants) GTPases by promoting the exchange of GDP for GTP.</text>
</comment>
<comment type="alternative products">
    <event type="alternative splicing"/>
    <isoform>
        <id>A4IJ27-1</id>
        <name>1</name>
        <sequence type="displayed"/>
    </isoform>
    <text>A number of isoforms are produced. According to EST sequences.</text>
</comment>
<comment type="domain">
    <text evidence="1">The PRONE (plant-specific Rop nucleotide exchanger) domain is responsible for the GEF activity.</text>
</comment>
<comment type="sequence caution" evidence="4">
    <conflict type="erroneous gene model prediction">
        <sequence resource="EMBL-CDS" id="AAB62823"/>
    </conflict>
</comment>
<comment type="sequence caution" evidence="4">
    <conflict type="erroneous gene model prediction">
        <sequence resource="EMBL-CDS" id="AAC13624"/>
    </conflict>
</comment>
<comment type="sequence caution" evidence="4">
    <conflict type="erroneous gene model prediction">
        <sequence resource="EMBL-CDS" id="AAF02781"/>
    </conflict>
</comment>
<comment type="sequence caution" evidence="4">
    <conflict type="erroneous gene model prediction">
        <sequence resource="EMBL-CDS" id="CAB80855"/>
    </conflict>
</comment>
<comment type="sequence caution" evidence="4">
    <conflict type="erroneous gene model prediction">
        <sequence resource="EMBL-CDS" id="CAB80856"/>
    </conflict>
</comment>
<protein>
    <recommendedName>
        <fullName>Rop guanine nucleotide exchange factor 3</fullName>
        <shortName>AtRopGEF3</shortName>
    </recommendedName>
    <alternativeName>
        <fullName>Rho of plants guanine nucleotide exchange factor 3</fullName>
    </alternativeName>
</protein>
<gene>
    <name type="primary">ROPGEF3</name>
    <name type="ordered locus">At4g00460</name>
    <name type="ORF">F5I10.1</name>
    <name type="ORF">F6N23.23</name>
</gene>
<accession>A4IJ27</accession>
<accession>O23056</accession>
<accession>O65256</accession>
<accession>Q9M163</accession>
<dbReference type="EMBL" id="AF013293">
    <property type="protein sequence ID" value="AAB62823.1"/>
    <property type="status" value="ALT_SEQ"/>
    <property type="molecule type" value="Genomic_DNA"/>
</dbReference>
<dbReference type="EMBL" id="AF058919">
    <property type="protein sequence ID" value="AAC13624.2"/>
    <property type="status" value="ALT_SEQ"/>
    <property type="molecule type" value="Genomic_DNA"/>
</dbReference>
<dbReference type="EMBL" id="AF195115">
    <property type="protein sequence ID" value="AAF02781.1"/>
    <property type="status" value="ALT_SEQ"/>
    <property type="molecule type" value="Genomic_DNA"/>
</dbReference>
<dbReference type="EMBL" id="AL161472">
    <property type="protein sequence ID" value="CAB80855.1"/>
    <property type="status" value="ALT_SEQ"/>
    <property type="molecule type" value="Genomic_DNA"/>
</dbReference>
<dbReference type="EMBL" id="AL161472">
    <property type="protein sequence ID" value="CAB80856.1"/>
    <property type="status" value="ALT_SEQ"/>
    <property type="molecule type" value="Genomic_DNA"/>
</dbReference>
<dbReference type="EMBL" id="CP002687">
    <property type="protein sequence ID" value="AEE81885.1"/>
    <property type="molecule type" value="Genomic_DNA"/>
</dbReference>
<dbReference type="EMBL" id="CP002687">
    <property type="protein sequence ID" value="ANM66275.1"/>
    <property type="molecule type" value="Genomic_DNA"/>
</dbReference>
<dbReference type="EMBL" id="BT030385">
    <property type="protein sequence ID" value="ABO45688.1"/>
    <property type="molecule type" value="mRNA"/>
</dbReference>
<dbReference type="PIR" id="G85006">
    <property type="entry name" value="G85006"/>
</dbReference>
<dbReference type="PIR" id="T01211">
    <property type="entry name" value="T01211"/>
</dbReference>
<dbReference type="PIR" id="T01525">
    <property type="entry name" value="T01525"/>
</dbReference>
<dbReference type="RefSeq" id="NP_001118903.1">
    <molecule id="A4IJ27-1"/>
    <property type="nucleotide sequence ID" value="NM_001125431.2"/>
</dbReference>
<dbReference type="RefSeq" id="NP_001328183.1">
    <molecule id="A4IJ27-1"/>
    <property type="nucleotide sequence ID" value="NM_001340253.1"/>
</dbReference>
<dbReference type="SMR" id="A4IJ27"/>
<dbReference type="FunCoup" id="A4IJ27">
    <property type="interactions" value="550"/>
</dbReference>
<dbReference type="STRING" id="3702.A4IJ27"/>
<dbReference type="iPTMnet" id="A4IJ27"/>
<dbReference type="PaxDb" id="3702-AT4G00460.2"/>
<dbReference type="ProteomicsDB" id="228215">
    <molecule id="A4IJ27-1"/>
</dbReference>
<dbReference type="DNASU" id="827967"/>
<dbReference type="EnsemblPlants" id="AT4G00460.2">
    <molecule id="A4IJ27-1"/>
    <property type="protein sequence ID" value="AT4G00460.2"/>
    <property type="gene ID" value="AT4G00460"/>
</dbReference>
<dbReference type="EnsemblPlants" id="AT4G00460.4">
    <molecule id="A4IJ27-1"/>
    <property type="protein sequence ID" value="AT4G00460.4"/>
    <property type="gene ID" value="AT4G00460"/>
</dbReference>
<dbReference type="GeneID" id="827967"/>
<dbReference type="Gramene" id="AT4G00460.2">
    <molecule id="A4IJ27-1"/>
    <property type="protein sequence ID" value="AT4G00460.2"/>
    <property type="gene ID" value="AT4G00460"/>
</dbReference>
<dbReference type="Gramene" id="AT4G00460.4">
    <molecule id="A4IJ27-1"/>
    <property type="protein sequence ID" value="AT4G00460.4"/>
    <property type="gene ID" value="AT4G00460"/>
</dbReference>
<dbReference type="KEGG" id="ath:AT4G00460"/>
<dbReference type="Araport" id="AT4G00460"/>
<dbReference type="TAIR" id="AT4G00460">
    <property type="gene designation" value="ROPGEF3"/>
</dbReference>
<dbReference type="eggNOG" id="ENOG502QV6R">
    <property type="taxonomic scope" value="Eukaryota"/>
</dbReference>
<dbReference type="HOGENOM" id="CLU_019073_4_1_1"/>
<dbReference type="InParanoid" id="A4IJ27"/>
<dbReference type="OMA" id="HMYSAEK"/>
<dbReference type="OrthoDB" id="1053009at2759"/>
<dbReference type="PhylomeDB" id="A4IJ27"/>
<dbReference type="PRO" id="PR:A4IJ27"/>
<dbReference type="Proteomes" id="UP000006548">
    <property type="component" value="Chromosome 4"/>
</dbReference>
<dbReference type="ExpressionAtlas" id="A4IJ27">
    <property type="expression patterns" value="baseline and differential"/>
</dbReference>
<dbReference type="GO" id="GO:0005085">
    <property type="term" value="F:guanyl-nucleotide exchange factor activity"/>
    <property type="evidence" value="ECO:0000250"/>
    <property type="project" value="TAIR"/>
</dbReference>
<dbReference type="FunFam" id="1.20.58.2010:FF:000001">
    <property type="entry name" value="Rop guanine nucleotide exchange factor 14"/>
    <property type="match status" value="1"/>
</dbReference>
<dbReference type="FunFam" id="1.20.58.2010:FF:000003">
    <property type="entry name" value="Rop guanine nucleotide exchange factor 14"/>
    <property type="match status" value="1"/>
</dbReference>
<dbReference type="Gene3D" id="1.20.58.2010">
    <property type="entry name" value="PRONE domain, subdomain 1"/>
    <property type="match status" value="2"/>
</dbReference>
<dbReference type="InterPro" id="IPR005512">
    <property type="entry name" value="PRONE_dom"/>
</dbReference>
<dbReference type="InterPro" id="IPR038937">
    <property type="entry name" value="RopGEF"/>
</dbReference>
<dbReference type="PANTHER" id="PTHR33101">
    <property type="entry name" value="ROP GUANINE NUCLEOTIDE EXCHANGE FACTOR 1"/>
    <property type="match status" value="1"/>
</dbReference>
<dbReference type="PANTHER" id="PTHR33101:SF47">
    <property type="entry name" value="ROP GUANINE NUCLEOTIDE EXCHANGE FACTOR 2-RELATED"/>
    <property type="match status" value="1"/>
</dbReference>
<dbReference type="Pfam" id="PF03759">
    <property type="entry name" value="PRONE"/>
    <property type="match status" value="1"/>
</dbReference>
<dbReference type="PROSITE" id="PS51334">
    <property type="entry name" value="PRONE"/>
    <property type="match status" value="1"/>
</dbReference>
<organism>
    <name type="scientific">Arabidopsis thaliana</name>
    <name type="common">Mouse-ear cress</name>
    <dbReference type="NCBI Taxonomy" id="3702"/>
    <lineage>
        <taxon>Eukaryota</taxon>
        <taxon>Viridiplantae</taxon>
        <taxon>Streptophyta</taxon>
        <taxon>Embryophyta</taxon>
        <taxon>Tracheophyta</taxon>
        <taxon>Spermatophyta</taxon>
        <taxon>Magnoliopsida</taxon>
        <taxon>eudicotyledons</taxon>
        <taxon>Gunneridae</taxon>
        <taxon>Pentapetalae</taxon>
        <taxon>rosids</taxon>
        <taxon>malvids</taxon>
        <taxon>Brassicales</taxon>
        <taxon>Brassicaceae</taxon>
        <taxon>Camelineae</taxon>
        <taxon>Arabidopsis</taxon>
    </lineage>
</organism>
<proteinExistence type="evidence at transcript level"/>
<keyword id="KW-0025">Alternative splicing</keyword>
<keyword id="KW-0344">Guanine-nucleotide releasing factor</keyword>
<keyword id="KW-1185">Reference proteome</keyword>
<sequence>MENLSNPDENDDHQSPRSIDQNDQSAVETPVYSTMSIDSFVYPRTCSETTSGFSDQIDETNSFCSEASPCNWPVLTESKSSKCLSGLEMQSNECLVVQEISEPELETMKERFAKLLLGEDMSGSGKGVCTAVTISNAITNLYATVFGQNLRLEPLETEKRALWKREMNCLLSVCDYIVEFIPRCQNLSNGATVEVMESRPRADIYINLPALRKLDSMLMEALDSFQNTEFWYAEEGSLSMKSARSSTGSFRKVIVQRKEEKWWLPVPLVPSEGLSDKARKQLKNKRESTNQIHKAAMAINSSILSEMEIPDSYMTTLPKCGKSSVGDSIYRYMSGSGRFFPEQLLDCLNISSEHEAVQLADRVEASMYTWRRKSCLSNSKNSWNMVKDLMSTTERTDKNYVMAERAETLLFCLKQRYPELSQTSLDICKIQYNKDVGKAVLESYSRVLEGLAFNIVAWIDDVLYVDKTMRGSE</sequence>
<name>ROGF3_ARATH</name>